<name>LIPA_CHLMU</name>
<proteinExistence type="inferred from homology"/>
<feature type="chain" id="PRO_0000102303" description="Lipoyl synthase">
    <location>
        <begin position="1"/>
        <end position="308"/>
    </location>
</feature>
<feature type="domain" description="Radical SAM core" evidence="2">
    <location>
        <begin position="60"/>
        <end position="277"/>
    </location>
</feature>
<feature type="binding site" evidence="1">
    <location>
        <position position="48"/>
    </location>
    <ligand>
        <name>[4Fe-4S] cluster</name>
        <dbReference type="ChEBI" id="CHEBI:49883"/>
        <label>1</label>
    </ligand>
</feature>
<feature type="binding site" evidence="1">
    <location>
        <position position="53"/>
    </location>
    <ligand>
        <name>[4Fe-4S] cluster</name>
        <dbReference type="ChEBI" id="CHEBI:49883"/>
        <label>1</label>
    </ligand>
</feature>
<feature type="binding site" evidence="1">
    <location>
        <position position="59"/>
    </location>
    <ligand>
        <name>[4Fe-4S] cluster</name>
        <dbReference type="ChEBI" id="CHEBI:49883"/>
        <label>1</label>
    </ligand>
</feature>
<feature type="binding site" evidence="1">
    <location>
        <position position="74"/>
    </location>
    <ligand>
        <name>[4Fe-4S] cluster</name>
        <dbReference type="ChEBI" id="CHEBI:49883"/>
        <label>2</label>
        <note>4Fe-4S-S-AdoMet</note>
    </ligand>
</feature>
<feature type="binding site" evidence="1">
    <location>
        <position position="78"/>
    </location>
    <ligand>
        <name>[4Fe-4S] cluster</name>
        <dbReference type="ChEBI" id="CHEBI:49883"/>
        <label>2</label>
        <note>4Fe-4S-S-AdoMet</note>
    </ligand>
</feature>
<feature type="binding site" evidence="1">
    <location>
        <position position="81"/>
    </location>
    <ligand>
        <name>[4Fe-4S] cluster</name>
        <dbReference type="ChEBI" id="CHEBI:49883"/>
        <label>2</label>
        <note>4Fe-4S-S-AdoMet</note>
    </ligand>
</feature>
<feature type="binding site" evidence="1">
    <location>
        <position position="287"/>
    </location>
    <ligand>
        <name>[4Fe-4S] cluster</name>
        <dbReference type="ChEBI" id="CHEBI:49883"/>
        <label>1</label>
    </ligand>
</feature>
<sequence length="308" mass="34278">MSNSPESSTPKQSIPARFPKWLRQKLPLGKVFSRTDGTIKNKGLPTVCEEASCPNRTHCWSRHTATYLALGDACTRRCGFCDIDFTKKPLPPDPQEGEKIAASAKALGLKHIVITMVSRDDLEDGGADALARIITTLHIELPEATIEVLASDFEGNIDALHHLLDARIAIYNHNVETVERLSPLVRHKATYRRSLMMLEQAAQYLPDLMIKSGIMVGLGEQESEIKQTLKDLADHGVKIVTIGQYLRPSRRHIPVKSYVSPETFDYYRSVGEALGLFIYAGPFVRSSFNADAVFEAMSQRERLSASIQ</sequence>
<organism>
    <name type="scientific">Chlamydia muridarum (strain MoPn / Nigg)</name>
    <dbReference type="NCBI Taxonomy" id="243161"/>
    <lineage>
        <taxon>Bacteria</taxon>
        <taxon>Pseudomonadati</taxon>
        <taxon>Chlamydiota</taxon>
        <taxon>Chlamydiia</taxon>
        <taxon>Chlamydiales</taxon>
        <taxon>Chlamydiaceae</taxon>
        <taxon>Chlamydia/Chlamydophila group</taxon>
        <taxon>Chlamydia</taxon>
    </lineage>
</organism>
<comment type="function">
    <text evidence="1">Catalyzes the radical-mediated insertion of two sulfur atoms into the C-6 and C-8 positions of the octanoyl moiety bound to the lipoyl domains of lipoate-dependent enzymes, thereby converting the octanoylated domains into lipoylated derivatives.</text>
</comment>
<comment type="catalytic activity">
    <reaction evidence="1">
        <text>[[Fe-S] cluster scaffold protein carrying a second [4Fe-4S](2+) cluster] + N(6)-octanoyl-L-lysyl-[protein] + 2 oxidized [2Fe-2S]-[ferredoxin] + 2 S-adenosyl-L-methionine + 4 H(+) = [[Fe-S] cluster scaffold protein] + N(6)-[(R)-dihydrolipoyl]-L-lysyl-[protein] + 4 Fe(3+) + 2 hydrogen sulfide + 2 5'-deoxyadenosine + 2 L-methionine + 2 reduced [2Fe-2S]-[ferredoxin]</text>
        <dbReference type="Rhea" id="RHEA:16585"/>
        <dbReference type="Rhea" id="RHEA-COMP:9928"/>
        <dbReference type="Rhea" id="RHEA-COMP:10000"/>
        <dbReference type="Rhea" id="RHEA-COMP:10001"/>
        <dbReference type="Rhea" id="RHEA-COMP:10475"/>
        <dbReference type="Rhea" id="RHEA-COMP:14568"/>
        <dbReference type="Rhea" id="RHEA-COMP:14569"/>
        <dbReference type="ChEBI" id="CHEBI:15378"/>
        <dbReference type="ChEBI" id="CHEBI:17319"/>
        <dbReference type="ChEBI" id="CHEBI:29034"/>
        <dbReference type="ChEBI" id="CHEBI:29919"/>
        <dbReference type="ChEBI" id="CHEBI:33722"/>
        <dbReference type="ChEBI" id="CHEBI:33737"/>
        <dbReference type="ChEBI" id="CHEBI:33738"/>
        <dbReference type="ChEBI" id="CHEBI:57844"/>
        <dbReference type="ChEBI" id="CHEBI:59789"/>
        <dbReference type="ChEBI" id="CHEBI:78809"/>
        <dbReference type="ChEBI" id="CHEBI:83100"/>
        <dbReference type="EC" id="2.8.1.8"/>
    </reaction>
</comment>
<comment type="cofactor">
    <cofactor evidence="1">
        <name>[4Fe-4S] cluster</name>
        <dbReference type="ChEBI" id="CHEBI:49883"/>
    </cofactor>
    <text evidence="1">Binds 2 [4Fe-4S] clusters per subunit. One cluster is coordinated with 3 cysteines and an exchangeable S-adenosyl-L-methionine.</text>
</comment>
<comment type="pathway">
    <text evidence="1">Protein modification; protein lipoylation via endogenous pathway; protein N(6)-(lipoyl)lysine from octanoyl-[acyl-carrier-protein]: step 2/2.</text>
</comment>
<comment type="subcellular location">
    <subcellularLocation>
        <location evidence="1">Cytoplasm</location>
    </subcellularLocation>
</comment>
<comment type="similarity">
    <text evidence="1">Belongs to the radical SAM superfamily. Lipoyl synthase family.</text>
</comment>
<evidence type="ECO:0000255" key="1">
    <source>
        <dbReference type="HAMAP-Rule" id="MF_00206"/>
    </source>
</evidence>
<evidence type="ECO:0000255" key="2">
    <source>
        <dbReference type="PROSITE-ProRule" id="PRU01266"/>
    </source>
</evidence>
<protein>
    <recommendedName>
        <fullName evidence="1">Lipoyl synthase</fullName>
        <ecNumber evidence="1">2.8.1.8</ecNumber>
    </recommendedName>
    <alternativeName>
        <fullName evidence="1">Lip-syn</fullName>
        <shortName evidence="1">LS</shortName>
    </alternativeName>
    <alternativeName>
        <fullName evidence="1">Lipoate synthase</fullName>
    </alternativeName>
    <alternativeName>
        <fullName evidence="1">Lipoic acid synthase</fullName>
    </alternativeName>
    <alternativeName>
        <fullName evidence="1">Sulfur insertion protein LipA</fullName>
    </alternativeName>
</protein>
<accession>Q9PJI2</accession>
<reference key="1">
    <citation type="journal article" date="2000" name="Nucleic Acids Res.">
        <title>Genome sequences of Chlamydia trachomatis MoPn and Chlamydia pneumoniae AR39.</title>
        <authorList>
            <person name="Read T.D."/>
            <person name="Brunham R.C."/>
            <person name="Shen C."/>
            <person name="Gill S.R."/>
            <person name="Heidelberg J.F."/>
            <person name="White O."/>
            <person name="Hickey E.K."/>
            <person name="Peterson J.D."/>
            <person name="Utterback T.R."/>
            <person name="Berry K.J."/>
            <person name="Bass S."/>
            <person name="Linher K.D."/>
            <person name="Weidman J.F."/>
            <person name="Khouri H.M."/>
            <person name="Craven B."/>
            <person name="Bowman C."/>
            <person name="Dodson R.J."/>
            <person name="Gwinn M.L."/>
            <person name="Nelson W.C."/>
            <person name="DeBoy R.T."/>
            <person name="Kolonay J.F."/>
            <person name="McClarty G."/>
            <person name="Salzberg S.L."/>
            <person name="Eisen J.A."/>
            <person name="Fraser C.M."/>
        </authorList>
    </citation>
    <scope>NUCLEOTIDE SEQUENCE [LARGE SCALE GENOMIC DNA]</scope>
    <source>
        <strain>MoPn / Nigg</strain>
    </source>
</reference>
<gene>
    <name evidence="1" type="primary">lipA</name>
    <name type="ordered locus">TC_0847</name>
</gene>
<dbReference type="EC" id="2.8.1.8" evidence="1"/>
<dbReference type="EMBL" id="AE002160">
    <property type="protein sequence ID" value="AAF39645.1"/>
    <property type="molecule type" value="Genomic_DNA"/>
</dbReference>
<dbReference type="PIR" id="C81658">
    <property type="entry name" value="C81658"/>
</dbReference>
<dbReference type="RefSeq" id="WP_010231744.1">
    <property type="nucleotide sequence ID" value="NZ_CP063055.1"/>
</dbReference>
<dbReference type="SMR" id="Q9PJI2"/>
<dbReference type="GeneID" id="1246215"/>
<dbReference type="KEGG" id="cmu:TC_0847"/>
<dbReference type="eggNOG" id="COG0320">
    <property type="taxonomic scope" value="Bacteria"/>
</dbReference>
<dbReference type="HOGENOM" id="CLU_033144_2_1_0"/>
<dbReference type="OrthoDB" id="9787898at2"/>
<dbReference type="UniPathway" id="UPA00538">
    <property type="reaction ID" value="UER00593"/>
</dbReference>
<dbReference type="Proteomes" id="UP000000800">
    <property type="component" value="Chromosome"/>
</dbReference>
<dbReference type="GO" id="GO:0005737">
    <property type="term" value="C:cytoplasm"/>
    <property type="evidence" value="ECO:0007669"/>
    <property type="project" value="UniProtKB-SubCell"/>
</dbReference>
<dbReference type="GO" id="GO:0051539">
    <property type="term" value="F:4 iron, 4 sulfur cluster binding"/>
    <property type="evidence" value="ECO:0007669"/>
    <property type="project" value="UniProtKB-UniRule"/>
</dbReference>
<dbReference type="GO" id="GO:0016992">
    <property type="term" value="F:lipoate synthase activity"/>
    <property type="evidence" value="ECO:0007669"/>
    <property type="project" value="UniProtKB-UniRule"/>
</dbReference>
<dbReference type="GO" id="GO:0046872">
    <property type="term" value="F:metal ion binding"/>
    <property type="evidence" value="ECO:0007669"/>
    <property type="project" value="UniProtKB-KW"/>
</dbReference>
<dbReference type="CDD" id="cd01335">
    <property type="entry name" value="Radical_SAM"/>
    <property type="match status" value="1"/>
</dbReference>
<dbReference type="FunFam" id="3.20.20.70:FF:000186">
    <property type="entry name" value="Lipoyl synthase"/>
    <property type="match status" value="1"/>
</dbReference>
<dbReference type="Gene3D" id="3.20.20.70">
    <property type="entry name" value="Aldolase class I"/>
    <property type="match status" value="1"/>
</dbReference>
<dbReference type="HAMAP" id="MF_00206">
    <property type="entry name" value="Lipoyl_synth"/>
    <property type="match status" value="1"/>
</dbReference>
<dbReference type="InterPro" id="IPR013785">
    <property type="entry name" value="Aldolase_TIM"/>
</dbReference>
<dbReference type="InterPro" id="IPR006638">
    <property type="entry name" value="Elp3/MiaA/NifB-like_rSAM"/>
</dbReference>
<dbReference type="InterPro" id="IPR031691">
    <property type="entry name" value="LIAS_N"/>
</dbReference>
<dbReference type="InterPro" id="IPR003698">
    <property type="entry name" value="Lipoyl_synth"/>
</dbReference>
<dbReference type="InterPro" id="IPR007197">
    <property type="entry name" value="rSAM"/>
</dbReference>
<dbReference type="NCBIfam" id="TIGR00510">
    <property type="entry name" value="lipA"/>
    <property type="match status" value="1"/>
</dbReference>
<dbReference type="NCBIfam" id="NF004019">
    <property type="entry name" value="PRK05481.1"/>
    <property type="match status" value="1"/>
</dbReference>
<dbReference type="NCBIfam" id="NF009544">
    <property type="entry name" value="PRK12928.1"/>
    <property type="match status" value="1"/>
</dbReference>
<dbReference type="PANTHER" id="PTHR10949">
    <property type="entry name" value="LIPOYL SYNTHASE"/>
    <property type="match status" value="1"/>
</dbReference>
<dbReference type="PANTHER" id="PTHR10949:SF0">
    <property type="entry name" value="LIPOYL SYNTHASE, MITOCHONDRIAL"/>
    <property type="match status" value="1"/>
</dbReference>
<dbReference type="Pfam" id="PF16881">
    <property type="entry name" value="LIAS_N"/>
    <property type="match status" value="1"/>
</dbReference>
<dbReference type="Pfam" id="PF04055">
    <property type="entry name" value="Radical_SAM"/>
    <property type="match status" value="1"/>
</dbReference>
<dbReference type="PIRSF" id="PIRSF005963">
    <property type="entry name" value="Lipoyl_synth"/>
    <property type="match status" value="1"/>
</dbReference>
<dbReference type="SFLD" id="SFLDF00271">
    <property type="entry name" value="lipoyl_synthase"/>
    <property type="match status" value="1"/>
</dbReference>
<dbReference type="SFLD" id="SFLDG01058">
    <property type="entry name" value="lipoyl_synthase_like"/>
    <property type="match status" value="1"/>
</dbReference>
<dbReference type="SMART" id="SM00729">
    <property type="entry name" value="Elp3"/>
    <property type="match status" value="1"/>
</dbReference>
<dbReference type="SUPFAM" id="SSF102114">
    <property type="entry name" value="Radical SAM enzymes"/>
    <property type="match status" value="1"/>
</dbReference>
<dbReference type="PROSITE" id="PS51918">
    <property type="entry name" value="RADICAL_SAM"/>
    <property type="match status" value="1"/>
</dbReference>
<keyword id="KW-0004">4Fe-4S</keyword>
<keyword id="KW-0963">Cytoplasm</keyword>
<keyword id="KW-0408">Iron</keyword>
<keyword id="KW-0411">Iron-sulfur</keyword>
<keyword id="KW-0479">Metal-binding</keyword>
<keyword id="KW-0949">S-adenosyl-L-methionine</keyword>
<keyword id="KW-0808">Transferase</keyword>